<proteinExistence type="inferred from homology"/>
<keyword id="KW-0030">Aminoacyl-tRNA synthetase</keyword>
<keyword id="KW-0067">ATP-binding</keyword>
<keyword id="KW-0963">Cytoplasm</keyword>
<keyword id="KW-0436">Ligase</keyword>
<keyword id="KW-0460">Magnesium</keyword>
<keyword id="KW-0479">Metal-binding</keyword>
<keyword id="KW-0547">Nucleotide-binding</keyword>
<keyword id="KW-0648">Protein biosynthesis</keyword>
<keyword id="KW-1185">Reference proteome</keyword>
<keyword id="KW-0694">RNA-binding</keyword>
<keyword id="KW-0820">tRNA-binding</keyword>
<reference key="1">
    <citation type="journal article" date="2004" name="Science">
        <title>Illuminating the evolutionary history of chlamydiae.</title>
        <authorList>
            <person name="Horn M."/>
            <person name="Collingro A."/>
            <person name="Schmitz-Esser S."/>
            <person name="Beier C.L."/>
            <person name="Purkhold U."/>
            <person name="Fartmann B."/>
            <person name="Brandt P."/>
            <person name="Nyakatura G.J."/>
            <person name="Droege M."/>
            <person name="Frishman D."/>
            <person name="Rattei T."/>
            <person name="Mewes H.-W."/>
            <person name="Wagner M."/>
        </authorList>
    </citation>
    <scope>NUCLEOTIDE SEQUENCE [LARGE SCALE GENOMIC DNA]</scope>
    <source>
        <strain>UWE25</strain>
    </source>
</reference>
<accession>Q6MEA6</accession>
<feature type="chain" id="PRO_0000126923" description="Phenylalanine--tRNA ligase beta subunit">
    <location>
        <begin position="1"/>
        <end position="799"/>
    </location>
</feature>
<feature type="domain" description="tRNA-binding" evidence="1">
    <location>
        <begin position="39"/>
        <end position="150"/>
    </location>
</feature>
<feature type="domain" description="B5" evidence="1">
    <location>
        <begin position="402"/>
        <end position="478"/>
    </location>
</feature>
<feature type="domain" description="FDX-ACB" evidence="1">
    <location>
        <begin position="705"/>
        <end position="798"/>
    </location>
</feature>
<feature type="binding site" evidence="1">
    <location>
        <position position="456"/>
    </location>
    <ligand>
        <name>Mg(2+)</name>
        <dbReference type="ChEBI" id="CHEBI:18420"/>
        <note>shared with alpha subunit</note>
    </ligand>
</feature>
<feature type="binding site" evidence="1">
    <location>
        <position position="462"/>
    </location>
    <ligand>
        <name>Mg(2+)</name>
        <dbReference type="ChEBI" id="CHEBI:18420"/>
        <note>shared with alpha subunit</note>
    </ligand>
</feature>
<feature type="binding site" evidence="1">
    <location>
        <position position="465"/>
    </location>
    <ligand>
        <name>Mg(2+)</name>
        <dbReference type="ChEBI" id="CHEBI:18420"/>
        <note>shared with alpha subunit</note>
    </ligand>
</feature>
<feature type="binding site" evidence="1">
    <location>
        <position position="466"/>
    </location>
    <ligand>
        <name>Mg(2+)</name>
        <dbReference type="ChEBI" id="CHEBI:18420"/>
        <note>shared with alpha subunit</note>
    </ligand>
</feature>
<organism>
    <name type="scientific">Protochlamydia amoebophila (strain UWE25)</name>
    <dbReference type="NCBI Taxonomy" id="264201"/>
    <lineage>
        <taxon>Bacteria</taxon>
        <taxon>Pseudomonadati</taxon>
        <taxon>Chlamydiota</taxon>
        <taxon>Chlamydiia</taxon>
        <taxon>Parachlamydiales</taxon>
        <taxon>Parachlamydiaceae</taxon>
        <taxon>Candidatus Protochlamydia</taxon>
    </lineage>
</organism>
<gene>
    <name evidence="1" type="primary">pheT</name>
    <name type="ordered locus">pc0369</name>
</gene>
<comment type="catalytic activity">
    <reaction evidence="1">
        <text>tRNA(Phe) + L-phenylalanine + ATP = L-phenylalanyl-tRNA(Phe) + AMP + diphosphate + H(+)</text>
        <dbReference type="Rhea" id="RHEA:19413"/>
        <dbReference type="Rhea" id="RHEA-COMP:9668"/>
        <dbReference type="Rhea" id="RHEA-COMP:9699"/>
        <dbReference type="ChEBI" id="CHEBI:15378"/>
        <dbReference type="ChEBI" id="CHEBI:30616"/>
        <dbReference type="ChEBI" id="CHEBI:33019"/>
        <dbReference type="ChEBI" id="CHEBI:58095"/>
        <dbReference type="ChEBI" id="CHEBI:78442"/>
        <dbReference type="ChEBI" id="CHEBI:78531"/>
        <dbReference type="ChEBI" id="CHEBI:456215"/>
        <dbReference type="EC" id="6.1.1.20"/>
    </reaction>
</comment>
<comment type="cofactor">
    <cofactor evidence="1">
        <name>Mg(2+)</name>
        <dbReference type="ChEBI" id="CHEBI:18420"/>
    </cofactor>
    <text evidence="1">Binds 2 magnesium ions per tetramer.</text>
</comment>
<comment type="subunit">
    <text evidence="1">Tetramer of two alpha and two beta subunits.</text>
</comment>
<comment type="subcellular location">
    <subcellularLocation>
        <location evidence="1">Cytoplasm</location>
    </subcellularLocation>
</comment>
<comment type="similarity">
    <text evidence="1">Belongs to the phenylalanyl-tRNA synthetase beta subunit family. Type 1 subfamily.</text>
</comment>
<comment type="sequence caution" evidence="2">
    <conflict type="erroneous initiation">
        <sequence resource="EMBL-CDS" id="CAF23093"/>
    </conflict>
</comment>
<name>SYFB_PARUW</name>
<dbReference type="EC" id="6.1.1.20" evidence="1"/>
<dbReference type="EMBL" id="BX908798">
    <property type="protein sequence ID" value="CAF23093.1"/>
    <property type="status" value="ALT_INIT"/>
    <property type="molecule type" value="Genomic_DNA"/>
</dbReference>
<dbReference type="RefSeq" id="WP_044044738.1">
    <property type="nucleotide sequence ID" value="NC_005861.2"/>
</dbReference>
<dbReference type="SMR" id="Q6MEA6"/>
<dbReference type="STRING" id="264201.pc0369"/>
<dbReference type="eggNOG" id="COG0072">
    <property type="taxonomic scope" value="Bacteria"/>
</dbReference>
<dbReference type="eggNOG" id="COG0073">
    <property type="taxonomic scope" value="Bacteria"/>
</dbReference>
<dbReference type="HOGENOM" id="CLU_016891_0_0_0"/>
<dbReference type="OrthoDB" id="9805455at2"/>
<dbReference type="Proteomes" id="UP000000529">
    <property type="component" value="Chromosome"/>
</dbReference>
<dbReference type="GO" id="GO:0009328">
    <property type="term" value="C:phenylalanine-tRNA ligase complex"/>
    <property type="evidence" value="ECO:0007669"/>
    <property type="project" value="TreeGrafter"/>
</dbReference>
<dbReference type="GO" id="GO:0005524">
    <property type="term" value="F:ATP binding"/>
    <property type="evidence" value="ECO:0007669"/>
    <property type="project" value="UniProtKB-UniRule"/>
</dbReference>
<dbReference type="GO" id="GO:0000287">
    <property type="term" value="F:magnesium ion binding"/>
    <property type="evidence" value="ECO:0007669"/>
    <property type="project" value="UniProtKB-UniRule"/>
</dbReference>
<dbReference type="GO" id="GO:0004826">
    <property type="term" value="F:phenylalanine-tRNA ligase activity"/>
    <property type="evidence" value="ECO:0007669"/>
    <property type="project" value="UniProtKB-UniRule"/>
</dbReference>
<dbReference type="GO" id="GO:0000049">
    <property type="term" value="F:tRNA binding"/>
    <property type="evidence" value="ECO:0007669"/>
    <property type="project" value="UniProtKB-KW"/>
</dbReference>
<dbReference type="GO" id="GO:0006432">
    <property type="term" value="P:phenylalanyl-tRNA aminoacylation"/>
    <property type="evidence" value="ECO:0007669"/>
    <property type="project" value="UniProtKB-UniRule"/>
</dbReference>
<dbReference type="CDD" id="cd00769">
    <property type="entry name" value="PheRS_beta_core"/>
    <property type="match status" value="1"/>
</dbReference>
<dbReference type="CDD" id="cd02796">
    <property type="entry name" value="tRNA_bind_bactPheRS"/>
    <property type="match status" value="1"/>
</dbReference>
<dbReference type="FunFam" id="2.40.50.140:FF:000045">
    <property type="entry name" value="Phenylalanine--tRNA ligase beta subunit"/>
    <property type="match status" value="1"/>
</dbReference>
<dbReference type="FunFam" id="3.30.56.10:FF:000002">
    <property type="entry name" value="Phenylalanine--tRNA ligase beta subunit"/>
    <property type="match status" value="1"/>
</dbReference>
<dbReference type="FunFam" id="3.50.40.10:FF:000001">
    <property type="entry name" value="Phenylalanine--tRNA ligase beta subunit"/>
    <property type="match status" value="1"/>
</dbReference>
<dbReference type="Gene3D" id="3.30.56.10">
    <property type="match status" value="2"/>
</dbReference>
<dbReference type="Gene3D" id="3.30.930.10">
    <property type="entry name" value="Bira Bifunctional Protein, Domain 2"/>
    <property type="match status" value="1"/>
</dbReference>
<dbReference type="Gene3D" id="3.30.70.380">
    <property type="entry name" value="Ferrodoxin-fold anticodon-binding domain"/>
    <property type="match status" value="1"/>
</dbReference>
<dbReference type="Gene3D" id="2.40.50.140">
    <property type="entry name" value="Nucleic acid-binding proteins"/>
    <property type="match status" value="1"/>
</dbReference>
<dbReference type="Gene3D" id="3.50.40.10">
    <property type="entry name" value="Phenylalanyl-trna Synthetase, Chain B, domain 3"/>
    <property type="match status" value="1"/>
</dbReference>
<dbReference type="HAMAP" id="MF_00283">
    <property type="entry name" value="Phe_tRNA_synth_beta1"/>
    <property type="match status" value="1"/>
</dbReference>
<dbReference type="InterPro" id="IPR045864">
    <property type="entry name" value="aa-tRNA-synth_II/BPL/LPL"/>
</dbReference>
<dbReference type="InterPro" id="IPR005146">
    <property type="entry name" value="B3/B4_tRNA-bd"/>
</dbReference>
<dbReference type="InterPro" id="IPR009061">
    <property type="entry name" value="DNA-bd_dom_put_sf"/>
</dbReference>
<dbReference type="InterPro" id="IPR005121">
    <property type="entry name" value="Fdx_antiC-bd"/>
</dbReference>
<dbReference type="InterPro" id="IPR036690">
    <property type="entry name" value="Fdx_antiC-bd_sf"/>
</dbReference>
<dbReference type="InterPro" id="IPR012340">
    <property type="entry name" value="NA-bd_OB-fold"/>
</dbReference>
<dbReference type="InterPro" id="IPR045060">
    <property type="entry name" value="Phe-tRNA-ligase_IIc_bsu"/>
</dbReference>
<dbReference type="InterPro" id="IPR004532">
    <property type="entry name" value="Phe-tRNA-ligase_IIc_bsu_bact"/>
</dbReference>
<dbReference type="InterPro" id="IPR020825">
    <property type="entry name" value="Phe-tRNA_synthase-like_B3/B4"/>
</dbReference>
<dbReference type="InterPro" id="IPR041616">
    <property type="entry name" value="PheRS_beta_core"/>
</dbReference>
<dbReference type="InterPro" id="IPR002547">
    <property type="entry name" value="tRNA-bd_dom"/>
</dbReference>
<dbReference type="InterPro" id="IPR033714">
    <property type="entry name" value="tRNA_bind_bactPheRS"/>
</dbReference>
<dbReference type="InterPro" id="IPR005147">
    <property type="entry name" value="tRNA_synthase_B5-dom"/>
</dbReference>
<dbReference type="NCBIfam" id="TIGR00472">
    <property type="entry name" value="pheT_bact"/>
    <property type="match status" value="1"/>
</dbReference>
<dbReference type="NCBIfam" id="NF045760">
    <property type="entry name" value="YtpR"/>
    <property type="match status" value="1"/>
</dbReference>
<dbReference type="PANTHER" id="PTHR10947:SF0">
    <property type="entry name" value="PHENYLALANINE--TRNA LIGASE BETA SUBUNIT"/>
    <property type="match status" value="1"/>
</dbReference>
<dbReference type="PANTHER" id="PTHR10947">
    <property type="entry name" value="PHENYLALANYL-TRNA SYNTHETASE BETA CHAIN AND LEUCINE-RICH REPEAT-CONTAINING PROTEIN 47"/>
    <property type="match status" value="1"/>
</dbReference>
<dbReference type="Pfam" id="PF03483">
    <property type="entry name" value="B3_4"/>
    <property type="match status" value="1"/>
</dbReference>
<dbReference type="Pfam" id="PF03484">
    <property type="entry name" value="B5"/>
    <property type="match status" value="1"/>
</dbReference>
<dbReference type="Pfam" id="PF03147">
    <property type="entry name" value="FDX-ACB"/>
    <property type="match status" value="1"/>
</dbReference>
<dbReference type="Pfam" id="PF01588">
    <property type="entry name" value="tRNA_bind"/>
    <property type="match status" value="1"/>
</dbReference>
<dbReference type="Pfam" id="PF17759">
    <property type="entry name" value="tRNA_synthFbeta"/>
    <property type="match status" value="1"/>
</dbReference>
<dbReference type="SMART" id="SM00873">
    <property type="entry name" value="B3_4"/>
    <property type="match status" value="1"/>
</dbReference>
<dbReference type="SMART" id="SM00874">
    <property type="entry name" value="B5"/>
    <property type="match status" value="1"/>
</dbReference>
<dbReference type="SMART" id="SM00896">
    <property type="entry name" value="FDX-ACB"/>
    <property type="match status" value="1"/>
</dbReference>
<dbReference type="SUPFAM" id="SSF54991">
    <property type="entry name" value="Anticodon-binding domain of PheRS"/>
    <property type="match status" value="1"/>
</dbReference>
<dbReference type="SUPFAM" id="SSF55681">
    <property type="entry name" value="Class II aaRS and biotin synthetases"/>
    <property type="match status" value="1"/>
</dbReference>
<dbReference type="SUPFAM" id="SSF50249">
    <property type="entry name" value="Nucleic acid-binding proteins"/>
    <property type="match status" value="1"/>
</dbReference>
<dbReference type="SUPFAM" id="SSF56037">
    <property type="entry name" value="PheT/TilS domain"/>
    <property type="match status" value="1"/>
</dbReference>
<dbReference type="SUPFAM" id="SSF46955">
    <property type="entry name" value="Putative DNA-binding domain"/>
    <property type="match status" value="1"/>
</dbReference>
<dbReference type="PROSITE" id="PS51483">
    <property type="entry name" value="B5"/>
    <property type="match status" value="1"/>
</dbReference>
<dbReference type="PROSITE" id="PS51447">
    <property type="entry name" value="FDX_ACB"/>
    <property type="match status" value="1"/>
</dbReference>
<dbReference type="PROSITE" id="PS50886">
    <property type="entry name" value="TRBD"/>
    <property type="match status" value="1"/>
</dbReference>
<protein>
    <recommendedName>
        <fullName evidence="1">Phenylalanine--tRNA ligase beta subunit</fullName>
        <ecNumber evidence="1">6.1.1.20</ecNumber>
    </recommendedName>
    <alternativeName>
        <fullName evidence="1">Phenylalanyl-tRNA synthetase beta subunit</fullName>
        <shortName evidence="1">PheRS</shortName>
    </alternativeName>
</protein>
<evidence type="ECO:0000255" key="1">
    <source>
        <dbReference type="HAMAP-Rule" id="MF_00283"/>
    </source>
</evidence>
<evidence type="ECO:0000305" key="2"/>
<sequence length="799" mass="89854">MRIPLSWLKEYIDLNLEPVEIAKILTMAGLEVDGYEEIGKGFSGVIVGDVLEVEKHPNADKLLIALVSDGKEIHQVVCGASNCRKGLKTAFAPVGASLIDEGKEFKIKKGKLRGIESNGMLCSAKELQISNEDDGIMELSEHLQAGTALNTLYSDTIFEISLTPNLGHCASIVGVARELSAATSHPLRYPHLVFKEEGNLINNSLTLDIEAKEACSRYTCRVIKNVKVGASPDWLKAKIEKSGLRSVNNIVDVTNYVLLEMGHPLHAFDYDLVKGKKIVVRMAQEGEIFETLDGKERILKDSHLVIADSEKPIAIAGVMGGRNSEVSEKTTNIILESAFFDPIFVRKTSKQLGLQTDASKRFERGTDPNQLISVLNRAAMLIQMVAGGIIEDSILDEQTKDFLELTIRCRLSRINQILGTTLSRGEVETIFQSLGFHYQWDGQDSFMVCVPTYRTDVKEEIDLIEEVARIYGYDHIPRNGGRYQTSKLPDAPIYLFEKEIQSYLIAEGLQEFITCDLIGPTLVNVVQNLSMPAEAIVKVLNPTSIEQSILRTSLLPGLLQVVKYNLDHQNHQINGFEIGRIHFKDGDQYQEQSVVGILLSGFSQPYHFEEKKREYDFYDLKGIIENLLKELGIEKPQFKNLDLKTFHSGRQASLFVDELEVGSFGEVHPSIQRRLDVSQRILFGEFNLHDLMQVATKLEKVKPLAIYPGSERDWTFTIKTSVPFAEIIKAIHEQKSDLLENVLLLDIYRSEKLTVGHQNMTLRFIYRDFSKTIAQEVVENEHQRLKTAVSQKFANDLKQ</sequence>